<protein>
    <recommendedName>
        <fullName>Insulin gene enhancer protein ISL-2</fullName>
        <shortName>Islet-2</shortName>
    </recommendedName>
</protein>
<dbReference type="EMBL" id="L35568">
    <property type="protein sequence ID" value="AAA62172.1"/>
    <property type="molecule type" value="mRNA"/>
</dbReference>
<dbReference type="PIR" id="I50370">
    <property type="entry name" value="I50370"/>
</dbReference>
<dbReference type="SMR" id="P53410"/>
<dbReference type="FunCoup" id="P53410">
    <property type="interactions" value="48"/>
</dbReference>
<dbReference type="STRING" id="9031.ENSGALP00000055627"/>
<dbReference type="VEuPathDB" id="HostDB:geneid_396382"/>
<dbReference type="InParanoid" id="P53410"/>
<dbReference type="OrthoDB" id="6159439at2759"/>
<dbReference type="PhylomeDB" id="P53410"/>
<dbReference type="Proteomes" id="UP000000539">
    <property type="component" value="Unassembled WGS sequence"/>
</dbReference>
<dbReference type="GO" id="GO:0005634">
    <property type="term" value="C:nucleus"/>
    <property type="evidence" value="ECO:0000318"/>
    <property type="project" value="GO_Central"/>
</dbReference>
<dbReference type="GO" id="GO:0000987">
    <property type="term" value="F:cis-regulatory region sequence-specific DNA binding"/>
    <property type="evidence" value="ECO:0000318"/>
    <property type="project" value="GO_Central"/>
</dbReference>
<dbReference type="GO" id="GO:0000981">
    <property type="term" value="F:DNA-binding transcription factor activity, RNA polymerase II-specific"/>
    <property type="evidence" value="ECO:0000318"/>
    <property type="project" value="GO_Central"/>
</dbReference>
<dbReference type="GO" id="GO:0046872">
    <property type="term" value="F:metal ion binding"/>
    <property type="evidence" value="ECO:0007669"/>
    <property type="project" value="UniProtKB-KW"/>
</dbReference>
<dbReference type="GO" id="GO:0007409">
    <property type="term" value="P:axonogenesis"/>
    <property type="evidence" value="ECO:0000318"/>
    <property type="project" value="GO_Central"/>
</dbReference>
<dbReference type="GO" id="GO:0048665">
    <property type="term" value="P:neuron fate specification"/>
    <property type="evidence" value="ECO:0000318"/>
    <property type="project" value="GO_Central"/>
</dbReference>
<dbReference type="GO" id="GO:0045944">
    <property type="term" value="P:positive regulation of transcription by RNA polymerase II"/>
    <property type="evidence" value="ECO:0000318"/>
    <property type="project" value="GO_Central"/>
</dbReference>
<dbReference type="GO" id="GO:0032526">
    <property type="term" value="P:response to retinoic acid"/>
    <property type="evidence" value="ECO:0000314"/>
    <property type="project" value="AgBase"/>
</dbReference>
<dbReference type="CDD" id="cd00086">
    <property type="entry name" value="homeodomain"/>
    <property type="match status" value="1"/>
</dbReference>
<dbReference type="CDD" id="cd09471">
    <property type="entry name" value="LIM2_Isl2"/>
    <property type="match status" value="1"/>
</dbReference>
<dbReference type="FunFam" id="1.10.10.60:FF:000041">
    <property type="entry name" value="insulin gene enhancer protein ISL-1"/>
    <property type="match status" value="1"/>
</dbReference>
<dbReference type="FunFam" id="2.10.110.10:FF:000068">
    <property type="entry name" value="Insulin gene enhancer protein ISL-2"/>
    <property type="match status" value="1"/>
</dbReference>
<dbReference type="Gene3D" id="2.10.110.10">
    <property type="entry name" value="Cysteine Rich Protein"/>
    <property type="match status" value="2"/>
</dbReference>
<dbReference type="Gene3D" id="1.10.10.60">
    <property type="entry name" value="Homeodomain-like"/>
    <property type="match status" value="1"/>
</dbReference>
<dbReference type="InterPro" id="IPR001356">
    <property type="entry name" value="HD"/>
</dbReference>
<dbReference type="InterPro" id="IPR017970">
    <property type="entry name" value="Homeobox_CS"/>
</dbReference>
<dbReference type="InterPro" id="IPR009057">
    <property type="entry name" value="Homeodomain-like_sf"/>
</dbReference>
<dbReference type="InterPro" id="IPR047169">
    <property type="entry name" value="ISL1/2-like"/>
</dbReference>
<dbReference type="InterPro" id="IPR001781">
    <property type="entry name" value="Znf_LIM"/>
</dbReference>
<dbReference type="PANTHER" id="PTHR24204">
    <property type="entry name" value="INSULIN GENE ENHANCER PROTEIN"/>
    <property type="match status" value="1"/>
</dbReference>
<dbReference type="PANTHER" id="PTHR24204:SF2">
    <property type="entry name" value="INSULIN GENE ENHANCER PROTEIN ISL-2"/>
    <property type="match status" value="1"/>
</dbReference>
<dbReference type="Pfam" id="PF00046">
    <property type="entry name" value="Homeodomain"/>
    <property type="match status" value="1"/>
</dbReference>
<dbReference type="Pfam" id="PF00412">
    <property type="entry name" value="LIM"/>
    <property type="match status" value="2"/>
</dbReference>
<dbReference type="SMART" id="SM00389">
    <property type="entry name" value="HOX"/>
    <property type="match status" value="1"/>
</dbReference>
<dbReference type="SMART" id="SM00132">
    <property type="entry name" value="LIM"/>
    <property type="match status" value="2"/>
</dbReference>
<dbReference type="SUPFAM" id="SSF57716">
    <property type="entry name" value="Glucocorticoid receptor-like (DNA-binding domain)"/>
    <property type="match status" value="1"/>
</dbReference>
<dbReference type="SUPFAM" id="SSF46689">
    <property type="entry name" value="Homeodomain-like"/>
    <property type="match status" value="1"/>
</dbReference>
<dbReference type="PROSITE" id="PS00027">
    <property type="entry name" value="HOMEOBOX_1"/>
    <property type="match status" value="1"/>
</dbReference>
<dbReference type="PROSITE" id="PS50071">
    <property type="entry name" value="HOMEOBOX_2"/>
    <property type="match status" value="1"/>
</dbReference>
<dbReference type="PROSITE" id="PS00478">
    <property type="entry name" value="LIM_DOMAIN_1"/>
    <property type="match status" value="1"/>
</dbReference>
<dbReference type="PROSITE" id="PS50023">
    <property type="entry name" value="LIM_DOMAIN_2"/>
    <property type="match status" value="2"/>
</dbReference>
<organism>
    <name type="scientific">Gallus gallus</name>
    <name type="common">Chicken</name>
    <dbReference type="NCBI Taxonomy" id="9031"/>
    <lineage>
        <taxon>Eukaryota</taxon>
        <taxon>Metazoa</taxon>
        <taxon>Chordata</taxon>
        <taxon>Craniata</taxon>
        <taxon>Vertebrata</taxon>
        <taxon>Euteleostomi</taxon>
        <taxon>Archelosauria</taxon>
        <taxon>Archosauria</taxon>
        <taxon>Dinosauria</taxon>
        <taxon>Saurischia</taxon>
        <taxon>Theropoda</taxon>
        <taxon>Coelurosauria</taxon>
        <taxon>Aves</taxon>
        <taxon>Neognathae</taxon>
        <taxon>Galloanserae</taxon>
        <taxon>Galliformes</taxon>
        <taxon>Phasianidae</taxon>
        <taxon>Phasianinae</taxon>
        <taxon>Gallus</taxon>
    </lineage>
</organism>
<sequence>FLLRVSPDLEWHVACLKCAECGQPLDETCTCFLRDGKAYCKRDYGRLFGIKCAQCRAAFSSSDLVMRARDHVYHLECFRCAACGRQLLPGDQFCLRERDLLCRADHGPPPDGAAARGPRSPAPPPAHLAEPVPGRPPGPRPQSHKAAEKTTRVRTVLNEKQLHTLRTCYAANPRPDALMKEQLVEMTGLSPRVIRVWFQNKRCKDKKKSILMKQLQQQQHSDKTSLQGLTGTPLVAGSPVRHESAVQGSAVEVQTYQPPWKALSDFALQSDLEPPAAFQQLVSFSESGSLGTSSGSDVTSLSSQLPDTPNSMVPSPAET</sequence>
<name>ISL2_CHICK</name>
<evidence type="ECO:0000255" key="1">
    <source>
        <dbReference type="PROSITE-ProRule" id="PRU00108"/>
    </source>
</evidence>
<evidence type="ECO:0000255" key="2">
    <source>
        <dbReference type="PROSITE-ProRule" id="PRU00125"/>
    </source>
</evidence>
<evidence type="ECO:0000256" key="3">
    <source>
        <dbReference type="SAM" id="MobiDB-lite"/>
    </source>
</evidence>
<accession>P53410</accession>
<proteinExistence type="evidence at transcript level"/>
<keyword id="KW-0217">Developmental protein</keyword>
<keyword id="KW-0238">DNA-binding</keyword>
<keyword id="KW-0371">Homeobox</keyword>
<keyword id="KW-0440">LIM domain</keyword>
<keyword id="KW-0479">Metal-binding</keyword>
<keyword id="KW-0539">Nucleus</keyword>
<keyword id="KW-1185">Reference proteome</keyword>
<keyword id="KW-0677">Repeat</keyword>
<keyword id="KW-0862">Zinc</keyword>
<feature type="chain" id="PRO_0000075755" description="Insulin gene enhancer protein ISL-2">
    <location>
        <begin position="1" status="less than"/>
        <end position="319"/>
    </location>
</feature>
<feature type="domain" description="LIM zinc-binding 1" evidence="2">
    <location>
        <begin position="1" status="less than"/>
        <end position="43"/>
    </location>
</feature>
<feature type="domain" description="LIM zinc-binding 2" evidence="2">
    <location>
        <begin position="52"/>
        <end position="106"/>
    </location>
</feature>
<feature type="DNA-binding region" description="Homeobox" evidence="1">
    <location>
        <begin position="150"/>
        <end position="209"/>
    </location>
</feature>
<feature type="region of interest" description="Disordered" evidence="3">
    <location>
        <begin position="106"/>
        <end position="151"/>
    </location>
</feature>
<feature type="region of interest" description="Disordered" evidence="3">
    <location>
        <begin position="218"/>
        <end position="237"/>
    </location>
</feature>
<feature type="region of interest" description="Disordered" evidence="3">
    <location>
        <begin position="286"/>
        <end position="319"/>
    </location>
</feature>
<feature type="compositionally biased region" description="Polar residues" evidence="3">
    <location>
        <begin position="218"/>
        <end position="230"/>
    </location>
</feature>
<feature type="compositionally biased region" description="Low complexity" evidence="3">
    <location>
        <begin position="286"/>
        <end position="303"/>
    </location>
</feature>
<feature type="compositionally biased region" description="Polar residues" evidence="3">
    <location>
        <begin position="304"/>
        <end position="319"/>
    </location>
</feature>
<feature type="non-terminal residue">
    <location>
        <position position="1"/>
    </location>
</feature>
<comment type="function">
    <text>Transcriptional factor that defines subclasses of motoneurons that segregate into columns in the spinal cord and select distinct axon pathways. Acts in conjunction with LIM-1, LIM-3 and ISL-1.</text>
</comment>
<comment type="subcellular location">
    <subcellularLocation>
        <location>Nucleus</location>
    </subcellularLocation>
</comment>
<comment type="developmental stage">
    <text>Expressed prior to the formation of distinct motor axon pathways and before the segregation of motor neurons into columns. Expressed throughout the median and lateral motor column.</text>
</comment>
<reference key="1">
    <citation type="journal article" date="1994" name="Cell">
        <title>Topographic organization of embryonic motor neurons defined by expression of LIM homeobox genes.</title>
        <authorList>
            <person name="Tsuchida T."/>
            <person name="Ensini M."/>
            <person name="Morton S.B."/>
            <person name="Baldassare M."/>
            <person name="Edlund T."/>
            <person name="Jessell T.M."/>
            <person name="Pfaff S.L."/>
        </authorList>
    </citation>
    <scope>NUCLEOTIDE SEQUENCE [MRNA]</scope>
    <source>
        <tissue>Spinal cord</tissue>
    </source>
</reference>
<gene>
    <name type="primary">ISL2</name>
    <name type="synonym">ISL-2</name>
</gene>